<feature type="chain" id="PRO_1000084923" description="DNA polymerase IV">
    <location>
        <begin position="1"/>
        <end position="351"/>
    </location>
</feature>
<feature type="domain" description="UmuC" evidence="1">
    <location>
        <begin position="4"/>
        <end position="185"/>
    </location>
</feature>
<feature type="active site" evidence="1">
    <location>
        <position position="104"/>
    </location>
</feature>
<feature type="binding site" evidence="1">
    <location>
        <position position="8"/>
    </location>
    <ligand>
        <name>Mg(2+)</name>
        <dbReference type="ChEBI" id="CHEBI:18420"/>
    </ligand>
</feature>
<feature type="binding site" evidence="1">
    <location>
        <position position="103"/>
    </location>
    <ligand>
        <name>Mg(2+)</name>
        <dbReference type="ChEBI" id="CHEBI:18420"/>
    </ligand>
</feature>
<feature type="site" description="Substrate discrimination" evidence="1">
    <location>
        <position position="13"/>
    </location>
</feature>
<accession>A9MY13</accession>
<evidence type="ECO:0000255" key="1">
    <source>
        <dbReference type="HAMAP-Rule" id="MF_01113"/>
    </source>
</evidence>
<sequence>MRKIIHVDMDCFFAAVEMRDNPALRDIPIAIGGSRERRGVISTANYPARQFGVRSAMPTAMALKLCPHLTLLPGRFDAYKEASRHVRDIFSRYTSLIEPLSLDEAWLDVTDSPHCYGSATLIAREIRQTIFNELQLTASAGVAPVKFLAKIASDLNKPNGQYVITPADVPDFLKTLPLAKIPGVGKVSAAKLENMGLRTCGDIQQCDLAMLLKRFGKFGRVLWERSQGIDERDVNSERLRKSVGVERTLAEDIHEWSDCEAIIEHLYPELERRLAIVKPDLLIARQGVKLKFNDFQQTTQEHVWPQLNKEDLITTARKTWDERRGERGVRLVGLHVTLLDPQLERQLVLGL</sequence>
<name>DPO4_SALPB</name>
<comment type="function">
    <text evidence="1">Poorly processive, error-prone DNA polymerase involved in untargeted mutagenesis. Copies undamaged DNA at stalled replication forks, which arise in vivo from mismatched or misaligned primer ends. These misaligned primers can be extended by PolIV. Exhibits no 3'-5' exonuclease (proofreading) activity. May be involved in translesional synthesis, in conjunction with the beta clamp from PolIII.</text>
</comment>
<comment type="catalytic activity">
    <reaction evidence="1">
        <text>DNA(n) + a 2'-deoxyribonucleoside 5'-triphosphate = DNA(n+1) + diphosphate</text>
        <dbReference type="Rhea" id="RHEA:22508"/>
        <dbReference type="Rhea" id="RHEA-COMP:17339"/>
        <dbReference type="Rhea" id="RHEA-COMP:17340"/>
        <dbReference type="ChEBI" id="CHEBI:33019"/>
        <dbReference type="ChEBI" id="CHEBI:61560"/>
        <dbReference type="ChEBI" id="CHEBI:173112"/>
        <dbReference type="EC" id="2.7.7.7"/>
    </reaction>
</comment>
<comment type="cofactor">
    <cofactor evidence="1">
        <name>Mg(2+)</name>
        <dbReference type="ChEBI" id="CHEBI:18420"/>
    </cofactor>
    <text evidence="1">Binds 2 magnesium ions per subunit.</text>
</comment>
<comment type="subunit">
    <text evidence="1">Monomer.</text>
</comment>
<comment type="subcellular location">
    <subcellularLocation>
        <location evidence="1">Cytoplasm</location>
    </subcellularLocation>
</comment>
<comment type="similarity">
    <text evidence="1">Belongs to the DNA polymerase type-Y family.</text>
</comment>
<keyword id="KW-0963">Cytoplasm</keyword>
<keyword id="KW-0227">DNA damage</keyword>
<keyword id="KW-0234">DNA repair</keyword>
<keyword id="KW-0235">DNA replication</keyword>
<keyword id="KW-0238">DNA-binding</keyword>
<keyword id="KW-0239">DNA-directed DNA polymerase</keyword>
<keyword id="KW-0460">Magnesium</keyword>
<keyword id="KW-0479">Metal-binding</keyword>
<keyword id="KW-0515">Mutator protein</keyword>
<keyword id="KW-0548">Nucleotidyltransferase</keyword>
<keyword id="KW-0808">Transferase</keyword>
<dbReference type="EC" id="2.7.7.7" evidence="1"/>
<dbReference type="EMBL" id="CP000886">
    <property type="protein sequence ID" value="ABX68649.1"/>
    <property type="molecule type" value="Genomic_DNA"/>
</dbReference>
<dbReference type="RefSeq" id="WP_001226198.1">
    <property type="nucleotide sequence ID" value="NC_010102.1"/>
</dbReference>
<dbReference type="SMR" id="A9MY13"/>
<dbReference type="KEGG" id="spq:SPAB_03289"/>
<dbReference type="PATRIC" id="fig|1016998.12.peg.3107"/>
<dbReference type="HOGENOM" id="CLU_012348_1_2_6"/>
<dbReference type="BioCyc" id="SENT1016998:SPAB_RS13455-MONOMER"/>
<dbReference type="Proteomes" id="UP000008556">
    <property type="component" value="Chromosome"/>
</dbReference>
<dbReference type="GO" id="GO:0005829">
    <property type="term" value="C:cytosol"/>
    <property type="evidence" value="ECO:0007669"/>
    <property type="project" value="TreeGrafter"/>
</dbReference>
<dbReference type="GO" id="GO:0003684">
    <property type="term" value="F:damaged DNA binding"/>
    <property type="evidence" value="ECO:0007669"/>
    <property type="project" value="InterPro"/>
</dbReference>
<dbReference type="GO" id="GO:0003887">
    <property type="term" value="F:DNA-directed DNA polymerase activity"/>
    <property type="evidence" value="ECO:0007669"/>
    <property type="project" value="UniProtKB-UniRule"/>
</dbReference>
<dbReference type="GO" id="GO:0000287">
    <property type="term" value="F:magnesium ion binding"/>
    <property type="evidence" value="ECO:0007669"/>
    <property type="project" value="UniProtKB-UniRule"/>
</dbReference>
<dbReference type="GO" id="GO:0006261">
    <property type="term" value="P:DNA-templated DNA replication"/>
    <property type="evidence" value="ECO:0007669"/>
    <property type="project" value="UniProtKB-UniRule"/>
</dbReference>
<dbReference type="GO" id="GO:0042276">
    <property type="term" value="P:error-prone translesion synthesis"/>
    <property type="evidence" value="ECO:0007669"/>
    <property type="project" value="TreeGrafter"/>
</dbReference>
<dbReference type="GO" id="GO:0009432">
    <property type="term" value="P:SOS response"/>
    <property type="evidence" value="ECO:0007669"/>
    <property type="project" value="TreeGrafter"/>
</dbReference>
<dbReference type="CDD" id="cd03586">
    <property type="entry name" value="PolY_Pol_IV_kappa"/>
    <property type="match status" value="1"/>
</dbReference>
<dbReference type="FunFam" id="1.10.150.20:FF:000019">
    <property type="entry name" value="DNA polymerase IV"/>
    <property type="match status" value="1"/>
</dbReference>
<dbReference type="FunFam" id="3.30.1490.100:FF:000002">
    <property type="entry name" value="DNA polymerase IV"/>
    <property type="match status" value="1"/>
</dbReference>
<dbReference type="FunFam" id="3.30.70.270:FF:000002">
    <property type="entry name" value="DNA polymerase IV"/>
    <property type="match status" value="1"/>
</dbReference>
<dbReference type="FunFam" id="3.40.1170.60:FF:000001">
    <property type="entry name" value="DNA polymerase IV"/>
    <property type="match status" value="1"/>
</dbReference>
<dbReference type="Gene3D" id="3.30.70.270">
    <property type="match status" value="1"/>
</dbReference>
<dbReference type="Gene3D" id="3.40.1170.60">
    <property type="match status" value="1"/>
</dbReference>
<dbReference type="Gene3D" id="1.10.150.20">
    <property type="entry name" value="5' to 3' exonuclease, C-terminal subdomain"/>
    <property type="match status" value="1"/>
</dbReference>
<dbReference type="Gene3D" id="3.30.1490.100">
    <property type="entry name" value="DNA polymerase, Y-family, little finger domain"/>
    <property type="match status" value="1"/>
</dbReference>
<dbReference type="HAMAP" id="MF_01113">
    <property type="entry name" value="DNApol_IV"/>
    <property type="match status" value="1"/>
</dbReference>
<dbReference type="InterPro" id="IPR043502">
    <property type="entry name" value="DNA/RNA_pol_sf"/>
</dbReference>
<dbReference type="InterPro" id="IPR036775">
    <property type="entry name" value="DNA_pol_Y-fam_lit_finger_sf"/>
</dbReference>
<dbReference type="InterPro" id="IPR017961">
    <property type="entry name" value="DNA_pol_Y-fam_little_finger"/>
</dbReference>
<dbReference type="InterPro" id="IPR050116">
    <property type="entry name" value="DNA_polymerase-Y"/>
</dbReference>
<dbReference type="InterPro" id="IPR022880">
    <property type="entry name" value="DNApol_IV"/>
</dbReference>
<dbReference type="InterPro" id="IPR053848">
    <property type="entry name" value="IMS_HHH_1"/>
</dbReference>
<dbReference type="InterPro" id="IPR043128">
    <property type="entry name" value="Rev_trsase/Diguanyl_cyclase"/>
</dbReference>
<dbReference type="InterPro" id="IPR001126">
    <property type="entry name" value="UmuC"/>
</dbReference>
<dbReference type="NCBIfam" id="NF002677">
    <property type="entry name" value="PRK02406.1"/>
    <property type="match status" value="1"/>
</dbReference>
<dbReference type="PANTHER" id="PTHR11076:SF33">
    <property type="entry name" value="DNA POLYMERASE KAPPA"/>
    <property type="match status" value="1"/>
</dbReference>
<dbReference type="PANTHER" id="PTHR11076">
    <property type="entry name" value="DNA REPAIR POLYMERASE UMUC / TRANSFERASE FAMILY MEMBER"/>
    <property type="match status" value="1"/>
</dbReference>
<dbReference type="Pfam" id="PF00817">
    <property type="entry name" value="IMS"/>
    <property type="match status" value="1"/>
</dbReference>
<dbReference type="Pfam" id="PF11799">
    <property type="entry name" value="IMS_C"/>
    <property type="match status" value="1"/>
</dbReference>
<dbReference type="Pfam" id="PF21999">
    <property type="entry name" value="IMS_HHH_1"/>
    <property type="match status" value="1"/>
</dbReference>
<dbReference type="SUPFAM" id="SSF56672">
    <property type="entry name" value="DNA/RNA polymerases"/>
    <property type="match status" value="1"/>
</dbReference>
<dbReference type="SUPFAM" id="SSF100879">
    <property type="entry name" value="Lesion bypass DNA polymerase (Y-family), little finger domain"/>
    <property type="match status" value="1"/>
</dbReference>
<dbReference type="PROSITE" id="PS50173">
    <property type="entry name" value="UMUC"/>
    <property type="match status" value="1"/>
</dbReference>
<gene>
    <name evidence="1" type="primary">dinB</name>
    <name type="ordered locus">SPAB_03289</name>
</gene>
<reference key="1">
    <citation type="submission" date="2007-11" db="EMBL/GenBank/DDBJ databases">
        <authorList>
            <consortium name="The Salmonella enterica serovar Paratyphi B Genome Sequencing Project"/>
            <person name="McClelland M."/>
            <person name="Sanderson E.K."/>
            <person name="Porwollik S."/>
            <person name="Spieth J."/>
            <person name="Clifton W.S."/>
            <person name="Fulton R."/>
            <person name="Cordes M."/>
            <person name="Wollam A."/>
            <person name="Shah N."/>
            <person name="Pepin K."/>
            <person name="Bhonagiri V."/>
            <person name="Nash W."/>
            <person name="Johnson M."/>
            <person name="Thiruvilangam P."/>
            <person name="Wilson R."/>
        </authorList>
    </citation>
    <scope>NUCLEOTIDE SEQUENCE [LARGE SCALE GENOMIC DNA]</scope>
    <source>
        <strain>ATCC BAA-1250 / SPB7</strain>
    </source>
</reference>
<organism>
    <name type="scientific">Salmonella paratyphi B (strain ATCC BAA-1250 / SPB7)</name>
    <dbReference type="NCBI Taxonomy" id="1016998"/>
    <lineage>
        <taxon>Bacteria</taxon>
        <taxon>Pseudomonadati</taxon>
        <taxon>Pseudomonadota</taxon>
        <taxon>Gammaproteobacteria</taxon>
        <taxon>Enterobacterales</taxon>
        <taxon>Enterobacteriaceae</taxon>
        <taxon>Salmonella</taxon>
    </lineage>
</organism>
<protein>
    <recommendedName>
        <fullName evidence="1">DNA polymerase IV</fullName>
        <shortName evidence="1">Pol IV</shortName>
        <ecNumber evidence="1">2.7.7.7</ecNumber>
    </recommendedName>
</protein>
<proteinExistence type="inferred from homology"/>